<accession>Q7VG35</accession>
<feature type="chain" id="PRO_0000301176" description="Sec-independent protein translocase protein TatB">
    <location>
        <begin position="1"/>
        <end position="189"/>
    </location>
</feature>
<feature type="transmembrane region" description="Helical" evidence="1">
    <location>
        <begin position="1"/>
        <end position="21"/>
    </location>
</feature>
<feature type="region of interest" description="Disordered" evidence="2">
    <location>
        <begin position="152"/>
        <end position="189"/>
    </location>
</feature>
<feature type="compositionally biased region" description="Polar residues" evidence="2">
    <location>
        <begin position="153"/>
        <end position="189"/>
    </location>
</feature>
<evidence type="ECO:0000255" key="1">
    <source>
        <dbReference type="HAMAP-Rule" id="MF_00237"/>
    </source>
</evidence>
<evidence type="ECO:0000256" key="2">
    <source>
        <dbReference type="SAM" id="MobiDB-lite"/>
    </source>
</evidence>
<organism>
    <name type="scientific">Helicobacter hepaticus (strain ATCC 51449 / 3B1)</name>
    <dbReference type="NCBI Taxonomy" id="235279"/>
    <lineage>
        <taxon>Bacteria</taxon>
        <taxon>Pseudomonadati</taxon>
        <taxon>Campylobacterota</taxon>
        <taxon>Epsilonproteobacteria</taxon>
        <taxon>Campylobacterales</taxon>
        <taxon>Helicobacteraceae</taxon>
        <taxon>Helicobacter</taxon>
    </lineage>
</organism>
<name>TATB_HELHP</name>
<gene>
    <name evidence="1" type="primary">tatB</name>
    <name type="ordered locus">HH_1489</name>
</gene>
<dbReference type="EMBL" id="AE017125">
    <property type="protein sequence ID" value="AAP78086.1"/>
    <property type="molecule type" value="Genomic_DNA"/>
</dbReference>
<dbReference type="RefSeq" id="WP_011116329.1">
    <property type="nucleotide sequence ID" value="NC_004917.1"/>
</dbReference>
<dbReference type="SMR" id="Q7VG35"/>
<dbReference type="STRING" id="235279.HH_1489"/>
<dbReference type="KEGG" id="hhe:HH_1489"/>
<dbReference type="eggNOG" id="COG1826">
    <property type="taxonomic scope" value="Bacteria"/>
</dbReference>
<dbReference type="HOGENOM" id="CLU_086034_0_0_7"/>
<dbReference type="OrthoDB" id="5373084at2"/>
<dbReference type="Proteomes" id="UP000002495">
    <property type="component" value="Chromosome"/>
</dbReference>
<dbReference type="GO" id="GO:0033281">
    <property type="term" value="C:TAT protein transport complex"/>
    <property type="evidence" value="ECO:0007669"/>
    <property type="project" value="UniProtKB-UniRule"/>
</dbReference>
<dbReference type="GO" id="GO:0008320">
    <property type="term" value="F:protein transmembrane transporter activity"/>
    <property type="evidence" value="ECO:0007669"/>
    <property type="project" value="UniProtKB-UniRule"/>
</dbReference>
<dbReference type="GO" id="GO:0043953">
    <property type="term" value="P:protein transport by the Tat complex"/>
    <property type="evidence" value="ECO:0007669"/>
    <property type="project" value="UniProtKB-UniRule"/>
</dbReference>
<dbReference type="Gene3D" id="1.20.5.3310">
    <property type="match status" value="1"/>
</dbReference>
<dbReference type="HAMAP" id="MF_00237">
    <property type="entry name" value="TatB"/>
    <property type="match status" value="1"/>
</dbReference>
<dbReference type="InterPro" id="IPR018448">
    <property type="entry name" value="TatB"/>
</dbReference>
<dbReference type="NCBIfam" id="TIGR01410">
    <property type="entry name" value="tatB"/>
    <property type="match status" value="1"/>
</dbReference>
<dbReference type="PRINTS" id="PR01506">
    <property type="entry name" value="TATBPROTEIN"/>
</dbReference>
<sequence>MFGVGIFEVLVILIVAVIALGPNKLPQTIVDIVKFFRAVKKTMAEAKETFDKEIQLSEIKQEALKYKDTLESEVNKLTKDIRLDELREISVDSLTKPLQETKEVLSEEAKNLQSTLESLNSDISYESSAAAQTPTTQESIPTDSTREIAYATQKPQNSIDSINSKESSVDSLHSPSIVESTQSSSSKDS</sequence>
<proteinExistence type="inferred from homology"/>
<reference key="1">
    <citation type="journal article" date="2003" name="Proc. Natl. Acad. Sci. U.S.A.">
        <title>The complete genome sequence of the carcinogenic bacterium Helicobacter hepaticus.</title>
        <authorList>
            <person name="Suerbaum S."/>
            <person name="Josenhans C."/>
            <person name="Sterzenbach T."/>
            <person name="Drescher B."/>
            <person name="Brandt P."/>
            <person name="Bell M."/>
            <person name="Droege M."/>
            <person name="Fartmann B."/>
            <person name="Fischer H.-P."/>
            <person name="Ge Z."/>
            <person name="Hoerster A."/>
            <person name="Holland R."/>
            <person name="Klein K."/>
            <person name="Koenig J."/>
            <person name="Macko L."/>
            <person name="Mendz G.L."/>
            <person name="Nyakatura G."/>
            <person name="Schauer D.B."/>
            <person name="Shen Z."/>
            <person name="Weber J."/>
            <person name="Frosch M."/>
            <person name="Fox J.G."/>
        </authorList>
    </citation>
    <scope>NUCLEOTIDE SEQUENCE [LARGE SCALE GENOMIC DNA]</scope>
    <source>
        <strain>ATCC 51449 / 3B1</strain>
    </source>
</reference>
<protein>
    <recommendedName>
        <fullName evidence="1">Sec-independent protein translocase protein TatB</fullName>
    </recommendedName>
</protein>
<keyword id="KW-0997">Cell inner membrane</keyword>
<keyword id="KW-1003">Cell membrane</keyword>
<keyword id="KW-0472">Membrane</keyword>
<keyword id="KW-0653">Protein transport</keyword>
<keyword id="KW-1185">Reference proteome</keyword>
<keyword id="KW-0811">Translocation</keyword>
<keyword id="KW-0812">Transmembrane</keyword>
<keyword id="KW-1133">Transmembrane helix</keyword>
<keyword id="KW-0813">Transport</keyword>
<comment type="function">
    <text evidence="1">Part of the twin-arginine translocation (Tat) system that transports large folded proteins containing a characteristic twin-arginine motif in their signal peptide across membranes. Together with TatC, TatB is part of a receptor directly interacting with Tat signal peptides. TatB may form an oligomeric binding site that transiently accommodates folded Tat precursor proteins before their translocation.</text>
</comment>
<comment type="subunit">
    <text evidence="1">The Tat system comprises two distinct complexes: a TatABC complex, containing multiple copies of TatA, TatB and TatC subunits, and a separate TatA complex, containing only TatA subunits. Substrates initially bind to the TatABC complex, which probably triggers association of the separate TatA complex to form the active translocon.</text>
</comment>
<comment type="subcellular location">
    <subcellularLocation>
        <location evidence="1">Cell inner membrane</location>
        <topology evidence="1">Single-pass membrane protein</topology>
    </subcellularLocation>
</comment>
<comment type="similarity">
    <text evidence="1">Belongs to the TatB family.</text>
</comment>